<accession>C0JAT5</accession>
<evidence type="ECO:0000250" key="1">
    <source>
        <dbReference type="UniProtKB" id="A0A0D4WTV1"/>
    </source>
</evidence>
<evidence type="ECO:0000250" key="2">
    <source>
        <dbReference type="UniProtKB" id="A0A0D4WV12"/>
    </source>
</evidence>
<evidence type="ECO:0000250" key="3">
    <source>
        <dbReference type="UniProtKB" id="P0CE80"/>
    </source>
</evidence>
<evidence type="ECO:0000250" key="4">
    <source>
        <dbReference type="UniProtKB" id="Q4ZFU2"/>
    </source>
</evidence>
<evidence type="ECO:0000250" key="5">
    <source>
        <dbReference type="UniProtKB" id="Q8I914"/>
    </source>
</evidence>
<evidence type="ECO:0000303" key="6">
    <source>
    </source>
</evidence>
<evidence type="ECO:0000305" key="7"/>
<evidence type="ECO:0000305" key="8">
    <source>
    </source>
</evidence>
<sequence>WIMGHMVNAIGQIDEFVNLGANSIETDVSFDSSANPEYTYHGIPCDCGRNCKKWENFNDFLKGLRSATTPGNSKYKEKLVLVVFDLKTGSLYDNQANDAGKKLAKNLLQHYWNNGNNGGRAYIVLSIPDPNHYPLIKGFTDTLKQEGHPELLDKLGYDFSGNDAIGDVAKAYKKAGVSGHVWQSDGITNCLLRGLTRVKEAVANRDSGNGYINKVYYWTVDKRATTRDALDAGVDGIMTNYPDVITDVLNEAAYKSKFRVATYEDNPWETFKK</sequence>
<dbReference type="EC" id="4.6.1.-" evidence="4"/>
<dbReference type="EMBL" id="FJ171370">
    <property type="protein sequence ID" value="ACN48866.1"/>
    <property type="molecule type" value="mRNA"/>
</dbReference>
<dbReference type="SMR" id="C0JAT5"/>
<dbReference type="GO" id="GO:0005576">
    <property type="term" value="C:extracellular region"/>
    <property type="evidence" value="ECO:0007669"/>
    <property type="project" value="UniProtKB-SubCell"/>
</dbReference>
<dbReference type="GO" id="GO:0016829">
    <property type="term" value="F:lyase activity"/>
    <property type="evidence" value="ECO:0007669"/>
    <property type="project" value="UniProtKB-KW"/>
</dbReference>
<dbReference type="GO" id="GO:0046872">
    <property type="term" value="F:metal ion binding"/>
    <property type="evidence" value="ECO:0007669"/>
    <property type="project" value="UniProtKB-KW"/>
</dbReference>
<dbReference type="GO" id="GO:0008081">
    <property type="term" value="F:phosphoric diester hydrolase activity"/>
    <property type="evidence" value="ECO:0007669"/>
    <property type="project" value="InterPro"/>
</dbReference>
<dbReference type="GO" id="GO:0090729">
    <property type="term" value="F:toxin activity"/>
    <property type="evidence" value="ECO:0007669"/>
    <property type="project" value="UniProtKB-KW"/>
</dbReference>
<dbReference type="GO" id="GO:0031640">
    <property type="term" value="P:killing of cells of another organism"/>
    <property type="evidence" value="ECO:0007669"/>
    <property type="project" value="UniProtKB-KW"/>
</dbReference>
<dbReference type="GO" id="GO:0016042">
    <property type="term" value="P:lipid catabolic process"/>
    <property type="evidence" value="ECO:0007669"/>
    <property type="project" value="UniProtKB-KW"/>
</dbReference>
<dbReference type="CDD" id="cd08576">
    <property type="entry name" value="GDPD_like_SMaseD_PLD"/>
    <property type="match status" value="1"/>
</dbReference>
<dbReference type="Gene3D" id="3.20.20.190">
    <property type="entry name" value="Phosphatidylinositol (PI) phosphodiesterase"/>
    <property type="match status" value="1"/>
</dbReference>
<dbReference type="InterPro" id="IPR017946">
    <property type="entry name" value="PLC-like_Pdiesterase_TIM-brl"/>
</dbReference>
<dbReference type="Pfam" id="PF13653">
    <property type="entry name" value="GDPD_2"/>
    <property type="match status" value="1"/>
</dbReference>
<dbReference type="SUPFAM" id="SSF51695">
    <property type="entry name" value="PLC-like phosphodiesterases"/>
    <property type="match status" value="1"/>
</dbReference>
<proteinExistence type="evidence at transcript level"/>
<comment type="function">
    <text evidence="1 3">Dermonecrotic toxins cleave the phosphodiester linkage between the phosphate and headgroup of certain phospholipids (sphingolipid and lysolipid substrates), forming an alcohol (often choline) and a cyclic phosphate (By similarity). This toxin acts on sphingomyelin (SM) (By similarity). It may also act on ceramide phosphoethanolamine (CPE), lysophosphatidylcholine (LPC) and lysophosphatidylethanolamine (LPE), but not on lysophosphatidylserine (LPS), and lysophosphatidylglycerol (LPG) (By similarity). It acts by transphosphatidylation, releasing exclusively cyclic phosphate products as second products (By similarity). Induces dermonecrosis, hemolysis, increased vascular permeability, edema, inflammatory response, and platelet aggregation (By similarity).</text>
</comment>
<comment type="catalytic activity">
    <reaction evidence="1">
        <text>an N-(acyl)-sphingosylphosphocholine = an N-(acyl)-sphingosyl-1,3-cyclic phosphate + choline</text>
        <dbReference type="Rhea" id="RHEA:60652"/>
        <dbReference type="ChEBI" id="CHEBI:15354"/>
        <dbReference type="ChEBI" id="CHEBI:64583"/>
        <dbReference type="ChEBI" id="CHEBI:143892"/>
    </reaction>
</comment>
<comment type="catalytic activity">
    <reaction evidence="1">
        <text>an N-(acyl)-sphingosylphosphoethanolamine = an N-(acyl)-sphingosyl-1,3-cyclic phosphate + ethanolamine</text>
        <dbReference type="Rhea" id="RHEA:60648"/>
        <dbReference type="ChEBI" id="CHEBI:57603"/>
        <dbReference type="ChEBI" id="CHEBI:143891"/>
        <dbReference type="ChEBI" id="CHEBI:143892"/>
    </reaction>
</comment>
<comment type="catalytic activity">
    <reaction evidence="1">
        <text>a 1-acyl-sn-glycero-3-phosphocholine = a 1-acyl-sn-glycero-2,3-cyclic phosphate + choline</text>
        <dbReference type="Rhea" id="RHEA:60700"/>
        <dbReference type="ChEBI" id="CHEBI:15354"/>
        <dbReference type="ChEBI" id="CHEBI:58168"/>
        <dbReference type="ChEBI" id="CHEBI:143947"/>
    </reaction>
</comment>
<comment type="catalytic activity">
    <reaction evidence="1">
        <text>a 1-acyl-sn-glycero-3-phosphoethanolamine = a 1-acyl-sn-glycero-2,3-cyclic phosphate + ethanolamine</text>
        <dbReference type="Rhea" id="RHEA:60704"/>
        <dbReference type="ChEBI" id="CHEBI:57603"/>
        <dbReference type="ChEBI" id="CHEBI:64381"/>
        <dbReference type="ChEBI" id="CHEBI:143947"/>
    </reaction>
</comment>
<comment type="cofactor">
    <cofactor evidence="5">
        <name>Mg(2+)</name>
        <dbReference type="ChEBI" id="CHEBI:18420"/>
    </cofactor>
    <text evidence="5">Binds 1 Mg(2+) ion per subunit.</text>
</comment>
<comment type="subcellular location">
    <subcellularLocation>
        <location evidence="8">Secreted</location>
    </subcellularLocation>
</comment>
<comment type="tissue specificity">
    <text evidence="8">Expressed by the venom gland.</text>
</comment>
<comment type="similarity">
    <text evidence="7">Belongs to the arthropod phospholipase D family. Class II subfamily.</text>
</comment>
<comment type="caution">
    <text evidence="1 2 4">The most common activity assay for dermonecrotic toxins detects enzymatic activity by monitoring choline release from substrate. Liberation of choline from sphingomyelin (SM) or lysophosphatidylcholine (LPC) is commonly assumed to result from substrate hydrolysis, giving either ceramide-1-phosphate (C1P) or lysophosphatidic acid (LPA), respectively, as a second product. However, two studies from Lajoie and colleagues (2013 and 2015) report the observation of exclusive formation of cyclic phosphate products as second products, resulting from intramolecular transphosphatidylation. Cyclic phosphates have vastly different biological properties from their monoester counterparts, and they may be relevant to the pathology of brown spider envenomation.</text>
</comment>
<protein>
    <recommendedName>
        <fullName evidence="6">Dermonecrotic toxin LhSicTox-alphaIA1ii</fullName>
        <ecNumber evidence="4">4.6.1.-</ecNumber>
    </recommendedName>
    <alternativeName>
        <fullName>Phospholipase D</fullName>
        <shortName>PLD</shortName>
    </alternativeName>
    <alternativeName>
        <fullName>Sphingomyelin phosphodiesterase D</fullName>
        <shortName>SMD</shortName>
        <shortName>SMase D</shortName>
        <shortName>Sphingomyelinase D</shortName>
    </alternativeName>
</protein>
<organism>
    <name type="scientific">Loxosceles hirsuta</name>
    <name type="common">Recluse spider</name>
    <dbReference type="NCBI Taxonomy" id="571525"/>
    <lineage>
        <taxon>Eukaryota</taxon>
        <taxon>Metazoa</taxon>
        <taxon>Ecdysozoa</taxon>
        <taxon>Arthropoda</taxon>
        <taxon>Chelicerata</taxon>
        <taxon>Arachnida</taxon>
        <taxon>Araneae</taxon>
        <taxon>Araneomorphae</taxon>
        <taxon>Haplogynae</taxon>
        <taxon>Scytodoidea</taxon>
        <taxon>Sicariidae</taxon>
        <taxon>Loxosceles</taxon>
    </lineage>
</organism>
<feature type="chain" id="PRO_0000392732" description="Dermonecrotic toxin LhSicTox-alphaIA1ii">
    <location>
        <begin position="1" status="less than"/>
        <end position="273"/>
    </location>
</feature>
<feature type="active site" evidence="5">
    <location>
        <position position="5"/>
    </location>
</feature>
<feature type="active site" description="Nucleophile" evidence="5">
    <location>
        <position position="41"/>
    </location>
</feature>
<feature type="binding site" evidence="5">
    <location>
        <position position="25"/>
    </location>
    <ligand>
        <name>Mg(2+)</name>
        <dbReference type="ChEBI" id="CHEBI:18420"/>
    </ligand>
</feature>
<feature type="binding site" evidence="5">
    <location>
        <position position="27"/>
    </location>
    <ligand>
        <name>Mg(2+)</name>
        <dbReference type="ChEBI" id="CHEBI:18420"/>
    </ligand>
</feature>
<feature type="binding site" evidence="5">
    <location>
        <position position="85"/>
    </location>
    <ligand>
        <name>Mg(2+)</name>
        <dbReference type="ChEBI" id="CHEBI:18420"/>
    </ligand>
</feature>
<feature type="disulfide bond" evidence="3">
    <location>
        <begin position="45"/>
        <end position="51"/>
    </location>
</feature>
<feature type="disulfide bond" evidence="3">
    <location>
        <begin position="47"/>
        <end position="190"/>
    </location>
</feature>
<feature type="non-terminal residue">
    <location>
        <position position="1"/>
    </location>
</feature>
<name>A1H2_LOXHI</name>
<reference key="1">
    <citation type="journal article" date="2009" name="Mol. Biol. Evol.">
        <title>Molecular evolution, functional variation, and proposed nomenclature of the gene family that includes sphingomyelinase D in sicariid spider venoms.</title>
        <authorList>
            <person name="Binford G.J."/>
            <person name="Bodner M.R."/>
            <person name="Cordes M.H."/>
            <person name="Baldwin K.L."/>
            <person name="Rynerson M.R."/>
            <person name="Burns S.N."/>
            <person name="Zobel-Thropp P.A."/>
        </authorList>
    </citation>
    <scope>NUCLEOTIDE SEQUENCE [MRNA]</scope>
    <scope>NOMENCLATURE</scope>
    <source>
        <tissue>Venom gland</tissue>
    </source>
</reference>
<keyword id="KW-0204">Cytolysis</keyword>
<keyword id="KW-1061">Dermonecrotic toxin</keyword>
<keyword id="KW-1015">Disulfide bond</keyword>
<keyword id="KW-0354">Hemolysis</keyword>
<keyword id="KW-0442">Lipid degradation</keyword>
<keyword id="KW-0443">Lipid metabolism</keyword>
<keyword id="KW-0456">Lyase</keyword>
<keyword id="KW-0460">Magnesium</keyword>
<keyword id="KW-0479">Metal-binding</keyword>
<keyword id="KW-0964">Secreted</keyword>
<keyword id="KW-0800">Toxin</keyword>